<feature type="chain" id="PRO_0000313824" description="Transcription factor Gibbin">
    <location>
        <begin position="1"/>
        <end position="1603"/>
    </location>
</feature>
<feature type="DNA-binding region" description="A.T hook 1">
    <location>
        <begin position="396"/>
        <end position="408"/>
    </location>
</feature>
<feature type="DNA-binding region" description="A.T hook 2">
    <location>
        <begin position="544"/>
        <end position="556"/>
    </location>
</feature>
<feature type="region of interest" description="Disordered" evidence="2">
    <location>
        <begin position="19"/>
        <end position="108"/>
    </location>
</feature>
<feature type="region of interest" description="Disordered" evidence="2">
    <location>
        <begin position="150"/>
        <end position="236"/>
    </location>
</feature>
<feature type="region of interest" description="Disordered" evidence="2">
    <location>
        <begin position="264"/>
        <end position="285"/>
    </location>
</feature>
<feature type="region of interest" description="Disordered" evidence="2">
    <location>
        <begin position="394"/>
        <end position="467"/>
    </location>
</feature>
<feature type="region of interest" description="Disordered" evidence="2">
    <location>
        <begin position="581"/>
        <end position="607"/>
    </location>
</feature>
<feature type="region of interest" description="Disordered" evidence="2">
    <location>
        <begin position="717"/>
        <end position="792"/>
    </location>
</feature>
<feature type="region of interest" description="Disordered" evidence="2">
    <location>
        <begin position="806"/>
        <end position="827"/>
    </location>
</feature>
<feature type="region of interest" description="Disordered" evidence="2">
    <location>
        <begin position="1159"/>
        <end position="1198"/>
    </location>
</feature>
<feature type="region of interest" description="Disordered" evidence="2">
    <location>
        <begin position="1253"/>
        <end position="1286"/>
    </location>
</feature>
<feature type="region of interest" description="Disordered" evidence="2">
    <location>
        <begin position="1503"/>
        <end position="1533"/>
    </location>
</feature>
<feature type="compositionally biased region" description="Pro residues" evidence="2">
    <location>
        <begin position="30"/>
        <end position="47"/>
    </location>
</feature>
<feature type="compositionally biased region" description="Polar residues" evidence="2">
    <location>
        <begin position="166"/>
        <end position="178"/>
    </location>
</feature>
<feature type="compositionally biased region" description="Basic and acidic residues" evidence="2">
    <location>
        <begin position="179"/>
        <end position="194"/>
    </location>
</feature>
<feature type="compositionally biased region" description="Low complexity" evidence="2">
    <location>
        <begin position="216"/>
        <end position="225"/>
    </location>
</feature>
<feature type="compositionally biased region" description="Low complexity" evidence="2">
    <location>
        <begin position="273"/>
        <end position="285"/>
    </location>
</feature>
<feature type="compositionally biased region" description="Pro residues" evidence="2">
    <location>
        <begin position="428"/>
        <end position="446"/>
    </location>
</feature>
<feature type="compositionally biased region" description="Basic residues" evidence="2">
    <location>
        <begin position="737"/>
        <end position="746"/>
    </location>
</feature>
<feature type="compositionally biased region" description="Polar residues" evidence="2">
    <location>
        <begin position="816"/>
        <end position="827"/>
    </location>
</feature>
<feature type="compositionally biased region" description="Low complexity" evidence="2">
    <location>
        <begin position="1160"/>
        <end position="1171"/>
    </location>
</feature>
<feature type="compositionally biased region" description="Low complexity" evidence="2">
    <location>
        <begin position="1187"/>
        <end position="1198"/>
    </location>
</feature>
<feature type="modified residue" description="N6-acetyllysine" evidence="1">
    <location>
        <position position="79"/>
    </location>
</feature>
<feature type="modified residue" description="Phosphoserine" evidence="28">
    <location>
        <position position="268"/>
    </location>
</feature>
<feature type="modified residue" description="Phosphoserine" evidence="25 26">
    <location>
        <position position="596"/>
    </location>
</feature>
<feature type="modified residue" description="Phosphoserine" evidence="23">
    <location>
        <position position="829"/>
    </location>
</feature>
<feature type="modified residue" description="Phosphoserine" evidence="24">
    <location>
        <position position="846"/>
    </location>
</feature>
<feature type="modified residue" description="Omega-N-methylarginine" evidence="27">
    <location>
        <position position="891"/>
    </location>
</feature>
<feature type="modified residue" description="Phosphoserine" evidence="26">
    <location>
        <position position="896"/>
    </location>
</feature>
<feature type="modified residue" description="Phosphoserine" evidence="26">
    <location>
        <position position="1064"/>
    </location>
</feature>
<feature type="modified residue" description="Phosphoserine" evidence="26">
    <location>
        <position position="1187"/>
    </location>
</feature>
<feature type="modified residue" description="Phosphoserine" evidence="1">
    <location>
        <position position="1322"/>
    </location>
</feature>
<feature type="modified residue" description="Phosphoserine" evidence="1">
    <location>
        <position position="1324"/>
    </location>
</feature>
<feature type="modified residue" description="Phosphoserine" evidence="22 24 26 28">
    <location>
        <position position="1399"/>
    </location>
</feature>
<feature type="modified residue" description="Phosphothreonine" evidence="1">
    <location>
        <position position="1401"/>
    </location>
</feature>
<feature type="modified residue" description="Phosphoserine" evidence="1">
    <location>
        <position position="1403"/>
    </location>
</feature>
<feature type="modified residue" description="Phosphoserine" evidence="26 28">
    <location>
        <position position="1507"/>
    </location>
</feature>
<feature type="modified residue" description="Phosphoserine" evidence="1">
    <location>
        <position position="1549"/>
    </location>
</feature>
<feature type="cross-link" description="Glycyl lysine isopeptide (Lys-Gly) (interchain with G-Cter in SUMO2)" evidence="29">
    <location>
        <position position="609"/>
    </location>
</feature>
<feature type="cross-link" description="Glycyl lysine isopeptide (Lys-Gly) (interchain with G-Cter in SUMO2)" evidence="29">
    <location>
        <position position="1409"/>
    </location>
</feature>
<feature type="sequence variant" id="VAR_086657" description="In XIGIS; uncertain significance." evidence="16">
    <original>P</original>
    <variation>S</variation>
    <location>
        <position position="47"/>
    </location>
</feature>
<feature type="sequence variant" id="VAR_086658" description="In XIGIS." evidence="13">
    <location>
        <begin position="151"/>
        <end position="1603"/>
    </location>
</feature>
<feature type="sequence variant" id="VAR_086659" description="In XIGIS; impaired nuclear localization." evidence="7 14">
    <location>
        <begin position="262"/>
        <end position="1603"/>
    </location>
</feature>
<feature type="sequence variant" id="VAR_086660" description="In XIGIS." evidence="9 14">
    <location>
        <begin position="327"/>
        <end position="1603"/>
    </location>
</feature>
<feature type="sequence variant" id="VAR_086661" description="In XIGIS; uncertain significance." evidence="16">
    <original>R</original>
    <variation>W</variation>
    <location>
        <position position="487"/>
    </location>
</feature>
<feature type="sequence variant" id="VAR_086662" description="In XIGIS." evidence="5 8">
    <location>
        <begin position="494"/>
        <end position="1603"/>
    </location>
</feature>
<feature type="sequence variant" id="VAR_086663" description="In XIGIS." evidence="16">
    <original>G</original>
    <variation>D</variation>
    <location>
        <position position="537"/>
    </location>
</feature>
<feature type="sequence variant" id="VAR_086664" description="In XIGIS; uncertain significance." evidence="16">
    <original>G</original>
    <variation>S</variation>
    <location>
        <position position="548"/>
    </location>
</feature>
<feature type="sequence variant" id="VAR_086665" description="In XIGIS; uncertain significance." evidence="16">
    <original>R</original>
    <variation>H</variation>
    <location>
        <position position="549"/>
    </location>
</feature>
<feature type="sequence variant" id="VAR_086666" description="In XIGIS." evidence="8 14">
    <location>
        <begin position="587"/>
        <end position="1603"/>
    </location>
</feature>
<feature type="sequence variant" id="VAR_086667" description="In XIGIS; uncertain significance; does not affect nuclear localization." evidence="14">
    <original>D</original>
    <variation>N</variation>
    <location>
        <position position="607"/>
    </location>
</feature>
<feature type="sequence variant" id="VAR_086668" description="In XIGIS." evidence="7 14">
    <location>
        <begin position="688"/>
        <end position="1603"/>
    </location>
</feature>
<feature type="sequence variant" id="VAR_086669" description="In XIGIS." evidence="14">
    <location>
        <begin position="730"/>
        <end position="1603"/>
    </location>
</feature>
<feature type="sequence variant" id="VAR_086670" description="In XIGIS; uncertain significance; does not affect nuclear localization." evidence="14">
    <original>G</original>
    <variation>R</variation>
    <location>
        <position position="792"/>
    </location>
</feature>
<feature type="sequence variant" id="VAR_086671" description="In XIGIS." evidence="15">
    <location>
        <begin position="823"/>
        <end position="1603"/>
    </location>
</feature>
<feature type="sequence variant" id="VAR_086672" description="In XIGIS." evidence="8 14">
    <location>
        <begin position="825"/>
        <end position="1603"/>
    </location>
</feature>
<feature type="sequence variant" id="VAR_086673" description="In XIGIS." evidence="7 14">
    <location>
        <begin position="882"/>
        <end position="1603"/>
    </location>
</feature>
<feature type="sequence variant" id="VAR_086674" description="In XIGIS; does not affect nuclear localization." evidence="7 14">
    <location>
        <begin position="925"/>
        <end position="1603"/>
    </location>
</feature>
<feature type="sequence variant" id="VAR_037765" description="In dbSNP:rs4908364." evidence="3">
    <original>A</original>
    <variation>T</variation>
    <location>
        <position position="935"/>
    </location>
</feature>
<feature type="sequence variant" id="VAR_086675" description="In XIGIS; does not affect nuclear localization." evidence="7 14">
    <location>
        <begin position="970"/>
        <end position="1603"/>
    </location>
</feature>
<feature type="sequence variant" id="VAR_086676" description="In XIGIS." evidence="14">
    <location>
        <begin position="978"/>
        <end position="1603"/>
    </location>
</feature>
<feature type="sequence variant" id="VAR_086677" description="In XIGIS." evidence="14">
    <location>
        <begin position="1068"/>
        <end position="1603"/>
    </location>
</feature>
<feature type="sequence variant" id="VAR_086678" description="In XIGIS." evidence="14">
    <location>
        <begin position="1156"/>
        <end position="1603"/>
    </location>
</feature>
<feature type="sequence variant" id="VAR_086679" description="In XIGIS." evidence="7 14">
    <location>
        <begin position="1258"/>
        <end position="1603"/>
    </location>
</feature>
<feature type="sequence variant" id="VAR_086680" description="In XIGIS." evidence="7 14">
    <location>
        <begin position="1330"/>
        <end position="1603"/>
    </location>
</feature>
<feature type="sequence variant" id="VAR_086681" description="In XIGIS." evidence="16">
    <original>S</original>
    <variation>P</variation>
    <location>
        <position position="1348"/>
    </location>
</feature>
<feature type="sequence variant" id="VAR_086682" description="In XIGIS." evidence="11">
    <original>D</original>
    <variation>G</variation>
    <location>
        <position position="1457"/>
    </location>
</feature>
<feature type="sequence variant" id="VAR_086683" description="In XIGIS; uncertain significance." evidence="16">
    <original>P</original>
    <variation>S</variation>
    <location>
        <position position="1478"/>
    </location>
</feature>
<feature type="sequence conflict" description="In Ref. 4; AAB50205." evidence="20" ref="4">
    <original>Q</original>
    <variation>H</variation>
    <location>
        <position position="1453"/>
    </location>
</feature>
<organism>
    <name type="scientific">Homo sapiens</name>
    <name type="common">Human</name>
    <dbReference type="NCBI Taxonomy" id="9606"/>
    <lineage>
        <taxon>Eukaryota</taxon>
        <taxon>Metazoa</taxon>
        <taxon>Chordata</taxon>
        <taxon>Craniata</taxon>
        <taxon>Vertebrata</taxon>
        <taxon>Euteleostomi</taxon>
        <taxon>Mammalia</taxon>
        <taxon>Eutheria</taxon>
        <taxon>Euarchontoglires</taxon>
        <taxon>Primates</taxon>
        <taxon>Haplorrhini</taxon>
        <taxon>Catarrhini</taxon>
        <taxon>Hominidae</taxon>
        <taxon>Homo</taxon>
    </lineage>
</organism>
<comment type="function">
    <text evidence="17">Transcription factor required for the proper patterning of the epidermis, which plays a key role in early epithelial morphogenesis (PubMed:35585237). Directly binds promoter and enhancer regions and acts by maintaining local enhancer-promoter chromatin architecture (PubMed:35585237). Interacts with many sequence-specific zinc-finger transcription factors and methyl-CpG-binding proteins to regulate the expression of mesoderm genes that wire surface ectoderm stratification (PubMed:35585237).</text>
</comment>
<comment type="interaction">
    <interactant intactId="EBI-948813">
        <id>Q5TGY3</id>
    </interactant>
    <interactant intactId="EBI-930964">
        <id>P54253</id>
        <label>ATXN1</label>
    </interactant>
    <organismsDiffer>false</organismsDiffer>
    <experiments>5</experiments>
</comment>
<comment type="interaction">
    <interactant intactId="EBI-948813">
        <id>Q5TGY3</id>
    </interactant>
    <interactant intactId="EBI-466029">
        <id>P42858</id>
        <label>HTT</label>
    </interactant>
    <organismsDiffer>false</organismsDiffer>
    <experiments>12</experiments>
</comment>
<comment type="subcellular location">
    <subcellularLocation>
        <location evidence="14">Nucleus</location>
    </subcellularLocation>
    <subcellularLocation>
        <location evidence="17">Chromosome</location>
    </subcellularLocation>
    <text evidence="17">Associates with promoter and enhancer regions.</text>
</comment>
<comment type="disease" evidence="4 5 6 7 8 9 10 11 12 13 14 15 16">
    <disease id="DI-04125">
        <name>Xia-Gibbs syndrome</name>
        <acronym>XIGIS</acronym>
        <description>An autosomal dominant disorder characterized by intellectual disability, mild dysmorphism, hypotonia, delayed psychomotor development with absent or poor expressive language, hypoplasia of the corpus callosum, simplified gyral pattern, and delayed myelination.</description>
        <dbReference type="MIM" id="615829"/>
    </disease>
    <text>The disease is caused by variants affecting the gene represented in this entry.</text>
</comment>
<comment type="sequence caution" evidence="20">
    <conflict type="frameshift">
        <sequence resource="EMBL-CDS" id="AAB50205"/>
    </conflict>
</comment>
<comment type="sequence caution" evidence="20">
    <conflict type="erroneous initiation">
        <sequence resource="EMBL-CDS" id="BAC86163"/>
    </conflict>
</comment>
<evidence type="ECO:0000250" key="1">
    <source>
        <dbReference type="UniProtKB" id="Q6PAL7"/>
    </source>
</evidence>
<evidence type="ECO:0000256" key="2">
    <source>
        <dbReference type="SAM" id="MobiDB-lite"/>
    </source>
</evidence>
<evidence type="ECO:0000269" key="3">
    <source>
    </source>
</evidence>
<evidence type="ECO:0000269" key="4">
    <source>
    </source>
</evidence>
<evidence type="ECO:0000269" key="5">
    <source>
    </source>
</evidence>
<evidence type="ECO:0000269" key="6">
    <source>
    </source>
</evidence>
<evidence type="ECO:0000269" key="7">
    <source>
    </source>
</evidence>
<evidence type="ECO:0000269" key="8">
    <source>
    </source>
</evidence>
<evidence type="ECO:0000269" key="9">
    <source>
    </source>
</evidence>
<evidence type="ECO:0000269" key="10">
    <source>
    </source>
</evidence>
<evidence type="ECO:0000269" key="11">
    <source>
    </source>
</evidence>
<evidence type="ECO:0000269" key="12">
    <source>
    </source>
</evidence>
<evidence type="ECO:0000269" key="13">
    <source>
    </source>
</evidence>
<evidence type="ECO:0000269" key="14">
    <source>
    </source>
</evidence>
<evidence type="ECO:0000269" key="15">
    <source>
    </source>
</evidence>
<evidence type="ECO:0000269" key="16">
    <source>
    </source>
</evidence>
<evidence type="ECO:0000269" key="17">
    <source>
    </source>
</evidence>
<evidence type="ECO:0000303" key="18">
    <source>
    </source>
</evidence>
<evidence type="ECO:0000303" key="19">
    <source>
    </source>
</evidence>
<evidence type="ECO:0000305" key="20"/>
<evidence type="ECO:0000312" key="21">
    <source>
        <dbReference type="HGNC" id="HGNC:25230"/>
    </source>
</evidence>
<evidence type="ECO:0007744" key="22">
    <source>
    </source>
</evidence>
<evidence type="ECO:0007744" key="23">
    <source>
    </source>
</evidence>
<evidence type="ECO:0007744" key="24">
    <source>
    </source>
</evidence>
<evidence type="ECO:0007744" key="25">
    <source>
    </source>
</evidence>
<evidence type="ECO:0007744" key="26">
    <source>
    </source>
</evidence>
<evidence type="ECO:0007744" key="27">
    <source>
    </source>
</evidence>
<evidence type="ECO:0007744" key="28">
    <source>
    </source>
</evidence>
<evidence type="ECO:0007744" key="29">
    <source>
    </source>
</evidence>
<keyword id="KW-0007">Acetylation</keyword>
<keyword id="KW-0010">Activator</keyword>
<keyword id="KW-0158">Chromosome</keyword>
<keyword id="KW-0217">Developmental protein</keyword>
<keyword id="KW-0221">Differentiation</keyword>
<keyword id="KW-0225">Disease variant</keyword>
<keyword id="KW-0238">DNA-binding</keyword>
<keyword id="KW-0991">Intellectual disability</keyword>
<keyword id="KW-1017">Isopeptide bond</keyword>
<keyword id="KW-0488">Methylation</keyword>
<keyword id="KW-0539">Nucleus</keyword>
<keyword id="KW-0597">Phosphoprotein</keyword>
<keyword id="KW-1267">Proteomics identification</keyword>
<keyword id="KW-1185">Reference proteome</keyword>
<keyword id="KW-0677">Repeat</keyword>
<keyword id="KW-0804">Transcription</keyword>
<keyword id="KW-0805">Transcription regulation</keyword>
<keyword id="KW-0832">Ubl conjugation</keyword>
<protein>
    <recommendedName>
        <fullName evidence="19">Transcription factor Gibbin</fullName>
    </recommendedName>
    <alternativeName>
        <fullName evidence="20">AT-hook DNA-binding motif-containing protein 1</fullName>
    </alternativeName>
</protein>
<name>AHDC1_HUMAN</name>
<gene>
    <name evidence="18 21" type="primary">AHDC1</name>
</gene>
<accession>Q5TGY3</accession>
<accession>Q5TGY4</accession>
<accession>Q6PJK1</accession>
<accession>Q6ZUQ6</accession>
<accession>Q99769</accession>
<accession>Q9NUF5</accession>
<proteinExistence type="evidence at protein level"/>
<dbReference type="EMBL" id="AL031729">
    <property type="status" value="NOT_ANNOTATED_CDS"/>
    <property type="molecule type" value="Genomic_DNA"/>
</dbReference>
<dbReference type="EMBL" id="AK125431">
    <property type="protein sequence ID" value="BAC86163.1"/>
    <property type="status" value="ALT_INIT"/>
    <property type="molecule type" value="mRNA"/>
</dbReference>
<dbReference type="EMBL" id="BC002677">
    <property type="protein sequence ID" value="AAH02677.2"/>
    <property type="molecule type" value="mRNA"/>
</dbReference>
<dbReference type="EMBL" id="BC014394">
    <property type="protein sequence ID" value="AAH14394.3"/>
    <property type="molecule type" value="mRNA"/>
</dbReference>
<dbReference type="EMBL" id="U79259">
    <property type="protein sequence ID" value="AAB50205.1"/>
    <property type="status" value="ALT_FRAME"/>
    <property type="molecule type" value="mRNA"/>
</dbReference>
<dbReference type="CCDS" id="CCDS30652.1"/>
<dbReference type="RefSeq" id="NP_001025053.1">
    <property type="nucleotide sequence ID" value="NM_001029882.3"/>
</dbReference>
<dbReference type="RefSeq" id="NP_001358857.1">
    <property type="nucleotide sequence ID" value="NM_001371928.1"/>
</dbReference>
<dbReference type="RefSeq" id="XP_005245905.1">
    <property type="nucleotide sequence ID" value="XM_005245848.3"/>
</dbReference>
<dbReference type="RefSeq" id="XP_005245906.1">
    <property type="nucleotide sequence ID" value="XM_005245849.4"/>
</dbReference>
<dbReference type="RefSeq" id="XP_005245907.1">
    <property type="nucleotide sequence ID" value="XM_005245850.4"/>
</dbReference>
<dbReference type="RefSeq" id="XP_005245908.1">
    <property type="nucleotide sequence ID" value="XM_005245851.4"/>
</dbReference>
<dbReference type="RefSeq" id="XP_005245909.1">
    <property type="nucleotide sequence ID" value="XM_005245852.4"/>
</dbReference>
<dbReference type="RefSeq" id="XP_011539557.1">
    <property type="nucleotide sequence ID" value="XM_011541255.2"/>
</dbReference>
<dbReference type="RefSeq" id="XP_011539558.1">
    <property type="nucleotide sequence ID" value="XM_011541256.3"/>
</dbReference>
<dbReference type="RefSeq" id="XP_011539559.1">
    <property type="nucleotide sequence ID" value="XM_011541257.3"/>
</dbReference>
<dbReference type="RefSeq" id="XP_047273966.1">
    <property type="nucleotide sequence ID" value="XM_047418010.1"/>
</dbReference>
<dbReference type="RefSeq" id="XP_047273967.1">
    <property type="nucleotide sequence ID" value="XM_047418011.1"/>
</dbReference>
<dbReference type="RefSeq" id="XP_047273968.1">
    <property type="nucleotide sequence ID" value="XM_047418012.1"/>
</dbReference>
<dbReference type="RefSeq" id="XP_047273969.1">
    <property type="nucleotide sequence ID" value="XM_047418013.1"/>
</dbReference>
<dbReference type="RefSeq" id="XP_047273970.1">
    <property type="nucleotide sequence ID" value="XM_047418014.1"/>
</dbReference>
<dbReference type="RefSeq" id="XP_047273971.1">
    <property type="nucleotide sequence ID" value="XM_047418015.1"/>
</dbReference>
<dbReference type="RefSeq" id="XP_047273972.1">
    <property type="nucleotide sequence ID" value="XM_047418016.1"/>
</dbReference>
<dbReference type="RefSeq" id="XP_047273973.1">
    <property type="nucleotide sequence ID" value="XM_047418017.1"/>
</dbReference>
<dbReference type="RefSeq" id="XP_047273974.1">
    <property type="nucleotide sequence ID" value="XM_047418018.1"/>
</dbReference>
<dbReference type="RefSeq" id="XP_047273975.1">
    <property type="nucleotide sequence ID" value="XM_047418019.1"/>
</dbReference>
<dbReference type="RefSeq" id="XP_047273976.1">
    <property type="nucleotide sequence ID" value="XM_047418020.1"/>
</dbReference>
<dbReference type="RefSeq" id="XP_047273977.1">
    <property type="nucleotide sequence ID" value="XM_047418021.1"/>
</dbReference>
<dbReference type="RefSeq" id="XP_047273978.1">
    <property type="nucleotide sequence ID" value="XM_047418022.1"/>
</dbReference>
<dbReference type="RefSeq" id="XP_047273979.1">
    <property type="nucleotide sequence ID" value="XM_047418023.1"/>
</dbReference>
<dbReference type="BioGRID" id="118093">
    <property type="interactions" value="78"/>
</dbReference>
<dbReference type="FunCoup" id="Q5TGY3">
    <property type="interactions" value="1422"/>
</dbReference>
<dbReference type="IntAct" id="Q5TGY3">
    <property type="interactions" value="40"/>
</dbReference>
<dbReference type="MINT" id="Q5TGY3"/>
<dbReference type="STRING" id="9606.ENSP00000363123"/>
<dbReference type="GlyCosmos" id="Q5TGY3">
    <property type="glycosylation" value="2 sites, 1 glycan"/>
</dbReference>
<dbReference type="GlyGen" id="Q5TGY3">
    <property type="glycosylation" value="10 sites, 1 O-linked glycan (8 sites)"/>
</dbReference>
<dbReference type="iPTMnet" id="Q5TGY3"/>
<dbReference type="PhosphoSitePlus" id="Q5TGY3"/>
<dbReference type="BioMuta" id="AHDC1"/>
<dbReference type="DMDM" id="74746532"/>
<dbReference type="jPOST" id="Q5TGY3"/>
<dbReference type="MassIVE" id="Q5TGY3"/>
<dbReference type="PaxDb" id="9606-ENSP00000363123"/>
<dbReference type="PeptideAtlas" id="Q5TGY3"/>
<dbReference type="ProteomicsDB" id="65133"/>
<dbReference type="Pumba" id="Q5TGY3"/>
<dbReference type="Antibodypedia" id="30793">
    <property type="antibodies" value="22 antibodies from 8 providers"/>
</dbReference>
<dbReference type="DNASU" id="27245"/>
<dbReference type="Ensembl" id="ENST00000247087.10">
    <property type="protein sequence ID" value="ENSP00000247087.4"/>
    <property type="gene ID" value="ENSG00000126705.15"/>
</dbReference>
<dbReference type="Ensembl" id="ENST00000374011.6">
    <property type="protein sequence ID" value="ENSP00000363123.2"/>
    <property type="gene ID" value="ENSG00000126705.15"/>
</dbReference>
<dbReference type="Ensembl" id="ENST00000642245.1">
    <property type="protein sequence ID" value="ENSP00000495072.1"/>
    <property type="gene ID" value="ENSG00000126705.15"/>
</dbReference>
<dbReference type="Ensembl" id="ENST00000642416.1">
    <property type="protein sequence ID" value="ENSP00000494394.1"/>
    <property type="gene ID" value="ENSG00000126705.15"/>
</dbReference>
<dbReference type="Ensembl" id="ENST00000644989.1">
    <property type="protein sequence ID" value="ENSP00000495665.1"/>
    <property type="gene ID" value="ENSG00000126705.15"/>
</dbReference>
<dbReference type="Ensembl" id="ENST00000673934.1">
    <property type="protein sequence ID" value="ENSP00000501218.1"/>
    <property type="gene ID" value="ENSG00000126705.15"/>
</dbReference>
<dbReference type="GeneID" id="27245"/>
<dbReference type="KEGG" id="hsa:27245"/>
<dbReference type="MANE-Select" id="ENST00000673934.1">
    <property type="protein sequence ID" value="ENSP00000501218.1"/>
    <property type="RefSeq nucleotide sequence ID" value="NM_001371928.1"/>
    <property type="RefSeq protein sequence ID" value="NP_001358857.1"/>
</dbReference>
<dbReference type="UCSC" id="uc009vsy.4">
    <property type="organism name" value="human"/>
</dbReference>
<dbReference type="AGR" id="HGNC:25230"/>
<dbReference type="CTD" id="27245"/>
<dbReference type="DisGeNET" id="27245"/>
<dbReference type="GeneCards" id="AHDC1"/>
<dbReference type="GeneReviews" id="AHDC1"/>
<dbReference type="HGNC" id="HGNC:25230">
    <property type="gene designation" value="AHDC1"/>
</dbReference>
<dbReference type="HPA" id="ENSG00000126705">
    <property type="expression patterns" value="Low tissue specificity"/>
</dbReference>
<dbReference type="MalaCards" id="AHDC1"/>
<dbReference type="MIM" id="615790">
    <property type="type" value="gene"/>
</dbReference>
<dbReference type="MIM" id="615829">
    <property type="type" value="phenotype"/>
</dbReference>
<dbReference type="neXtProt" id="NX_Q5TGY3"/>
<dbReference type="OpenTargets" id="ENSG00000126705"/>
<dbReference type="Orphanet" id="412069">
    <property type="disease" value="AHDC1-related intellectual disability-obstructive sleep apnea-mild dysmorphism syndrome"/>
</dbReference>
<dbReference type="PharmGKB" id="PA142672633"/>
<dbReference type="VEuPathDB" id="HostDB:ENSG00000126705"/>
<dbReference type="eggNOG" id="ENOG502QSFA">
    <property type="taxonomic scope" value="Eukaryota"/>
</dbReference>
<dbReference type="GeneTree" id="ENSGT00390000018883"/>
<dbReference type="HOGENOM" id="CLU_004578_0_0_1"/>
<dbReference type="InParanoid" id="Q5TGY3"/>
<dbReference type="OMA" id="TEWAGDK"/>
<dbReference type="OrthoDB" id="8950893at2759"/>
<dbReference type="PAN-GO" id="Q5TGY3">
    <property type="GO annotations" value="0 GO annotations based on evolutionary models"/>
</dbReference>
<dbReference type="PhylomeDB" id="Q5TGY3"/>
<dbReference type="TreeFam" id="TF332128"/>
<dbReference type="PathwayCommons" id="Q5TGY3"/>
<dbReference type="SignaLink" id="Q5TGY3"/>
<dbReference type="SIGNOR" id="Q5TGY3"/>
<dbReference type="BioGRID-ORCS" id="27245">
    <property type="hits" value="16 hits in 1152 CRISPR screens"/>
</dbReference>
<dbReference type="CD-CODE" id="1A18FFC4">
    <property type="entry name" value="Paraspeckle"/>
</dbReference>
<dbReference type="ChiTaRS" id="AHDC1">
    <property type="organism name" value="human"/>
</dbReference>
<dbReference type="GenomeRNAi" id="27245"/>
<dbReference type="Pharos" id="Q5TGY3">
    <property type="development level" value="Tdark"/>
</dbReference>
<dbReference type="PRO" id="PR:Q5TGY3"/>
<dbReference type="Proteomes" id="UP000005640">
    <property type="component" value="Chromosome 1"/>
</dbReference>
<dbReference type="RNAct" id="Q5TGY3">
    <property type="molecule type" value="protein"/>
</dbReference>
<dbReference type="Bgee" id="ENSG00000126705">
    <property type="expression patterns" value="Expressed in paraflocculus and 151 other cell types or tissues"/>
</dbReference>
<dbReference type="GO" id="GO:0005694">
    <property type="term" value="C:chromosome"/>
    <property type="evidence" value="ECO:0007669"/>
    <property type="project" value="UniProtKB-SubCell"/>
</dbReference>
<dbReference type="GO" id="GO:0005634">
    <property type="term" value="C:nucleus"/>
    <property type="evidence" value="ECO:0000314"/>
    <property type="project" value="UniProtKB"/>
</dbReference>
<dbReference type="GO" id="GO:0003700">
    <property type="term" value="F:DNA-binding transcription factor activity"/>
    <property type="evidence" value="ECO:0000314"/>
    <property type="project" value="UniProtKB"/>
</dbReference>
<dbReference type="GO" id="GO:0140585">
    <property type="term" value="F:promoter-enhancer loop anchoring activity"/>
    <property type="evidence" value="ECO:0000314"/>
    <property type="project" value="UniProtKB"/>
</dbReference>
<dbReference type="GO" id="GO:0030154">
    <property type="term" value="P:cell differentiation"/>
    <property type="evidence" value="ECO:0007669"/>
    <property type="project" value="UniProtKB-KW"/>
</dbReference>
<dbReference type="GO" id="GO:0001707">
    <property type="term" value="P:mesoderm formation"/>
    <property type="evidence" value="ECO:0000314"/>
    <property type="project" value="UniProtKB"/>
</dbReference>
<dbReference type="GO" id="GO:0043589">
    <property type="term" value="P:skin morphogenesis"/>
    <property type="evidence" value="ECO:0000314"/>
    <property type="project" value="UniProtKB"/>
</dbReference>
<dbReference type="InterPro" id="IPR039225">
    <property type="entry name" value="AHDC1"/>
</dbReference>
<dbReference type="InterPro" id="IPR032757">
    <property type="entry name" value="DUF4683"/>
</dbReference>
<dbReference type="PANTHER" id="PTHR15617">
    <property type="entry name" value="TRANSCRIPTION FACTOR GIBBIN"/>
    <property type="match status" value="1"/>
</dbReference>
<dbReference type="PANTHER" id="PTHR15617:SF1">
    <property type="entry name" value="TRANSCRIPTION FACTOR GIBBIN"/>
    <property type="match status" value="1"/>
</dbReference>
<dbReference type="Pfam" id="PF15735">
    <property type="entry name" value="DUF4683"/>
    <property type="match status" value="1"/>
</dbReference>
<sequence length="1603" mass="168349">MRVKPQGLVVTSSAVCSSPDYLREPKYYPGGPPTPRPLLPTRPPASPPDKAFSTHAFSENPRPPPRRDPSTRRPPVLAKGDDPLPPRAARPVSQARCPTPVGDGSSSRRCWDNGRVNLRPVVQLIDIMKDLTRLSQDLQHSGVHLDCGGLRLSRPPAPPPGDLQYSFFSSPSLANSIRSPEERATPHAKSERPSHPLYEPEPEPRDSPQPGQGHSPGATAAATGLPPEPEPDSTDYSELADADILSELASLTCPEAQLLEAQALEPPSPEPEPQLLDPQPRFLDPQALEPLGEALELPPLQPLADPLGLPGLALQALDTLPDSLESQLLDPQALDPLPKLLDVPGRRLEPQQPLGHCPLAEPLRLDLCSPHGPPGPEGHPKYALRRTDRPKILCRRRKAGRGRKADAGPEGRLLPLPMPTGLVAALAEPPPPPPPPPPALPGPGPVSVPELKPESSQTPVVSTRKGKCRGVRRMVVKMAKIPVSLGRRNKTTYKVSSLSSSLSVEGKELGLRVSAEPTPLLKMKNNGRNVVVVFPPGEMPIILKRKRGRPPKNLLLGPGKPKEPAVVAAEAATVAAATMAMPEVKKRRRRKQKLASPQPSYAADANDSKAEYSDVLAKLAFLNRQSQCAGRCSPPRCWTPSEPESVHQAPDTQSISHFLHRVQGFRRRGGKAGGFGGRGGGHAAKSARCSFSDFFEGIGKKKKVVAVAAAGVGGPGLTELGHPRKRGRGEVDAVTGKPKRKRRSRKNGTLFPEQVPSGPGFGEAGAEWAGDKGGGWAPHHGHPGGQAGRNCGFQGTEARAFASTGLESGASGRGSYYSTGAPSGQTELSQERQNLFTGYFRSLLDSDDSSDLLDFALSASRPESRKASGTYAGPPTSALPAQRGLATFPSRGAKASPVAVGSSGAGADPSFQPVLSARQTFPPGRAASYGLTPAASDCRAAETFPKLVPPPSAMARSPTTHPPANTYLPQYGGYGAGQSVFAPTKPFTGQDCANSKDCSFAYGSGNSLPASPSSAHSAGYAPPPTGGPCLPPSKASFFSSSEGAPFSGSAPTPLRCDSRASTVSPGGYMVPKGTTASATSAASAASSSSSSFQPSPENCRQFAGASQWPFRQGYGGLDWASEAFSQLYNPSFDCHVSEPNVILDISNYTPQKVKQQTAVSETFSESSSDSTQFNQPVGGGGFRRANSEASSSEGQSSLSSLEKLMMDWNEASSAPGYNWNQSVLFQSSSKPGRGRRKKVDLFEASHLGFPTSASAAASGYPSKRSTGPRQPRGGRGGGACSAKKERGGAAAKAKFIPKPQPVNPLFQDSPDLGLDYYSGDSSMSPLPSQSRAFGVGERDPCDFIGPYSMNPSTPSDGTFGQGFHCDSPSLGAPELDGKHFPPLAHPPTVFDAGLQKAYSPTCSPTLGFKEELRPPPTKLAACEPLKHGLQGASLGHAAAAQAHLSCRDLPLGQPHYDSPSCKGTAYWYPPGSAARSPPYEGKVGTGLLADFLGRTEAACLSAPHLASPPATPKADKEPLEMARPPGPPRGPAAAAAGYGCPLLSDLTLSPVPRDSLLPLQDTAYRYPGFMPQAHPGLGGGPKSGFLGPMAEPHPEDTFTVTSL</sequence>
<reference key="1">
    <citation type="journal article" date="2006" name="Nature">
        <title>The DNA sequence and biological annotation of human chromosome 1.</title>
        <authorList>
            <person name="Gregory S.G."/>
            <person name="Barlow K.F."/>
            <person name="McLay K.E."/>
            <person name="Kaul R."/>
            <person name="Swarbreck D."/>
            <person name="Dunham A."/>
            <person name="Scott C.E."/>
            <person name="Howe K.L."/>
            <person name="Woodfine K."/>
            <person name="Spencer C.C.A."/>
            <person name="Jones M.C."/>
            <person name="Gillson C."/>
            <person name="Searle S."/>
            <person name="Zhou Y."/>
            <person name="Kokocinski F."/>
            <person name="McDonald L."/>
            <person name="Evans R."/>
            <person name="Phillips K."/>
            <person name="Atkinson A."/>
            <person name="Cooper R."/>
            <person name="Jones C."/>
            <person name="Hall R.E."/>
            <person name="Andrews T.D."/>
            <person name="Lloyd C."/>
            <person name="Ainscough R."/>
            <person name="Almeida J.P."/>
            <person name="Ambrose K.D."/>
            <person name="Anderson F."/>
            <person name="Andrew R.W."/>
            <person name="Ashwell R.I.S."/>
            <person name="Aubin K."/>
            <person name="Babbage A.K."/>
            <person name="Bagguley C.L."/>
            <person name="Bailey J."/>
            <person name="Beasley H."/>
            <person name="Bethel G."/>
            <person name="Bird C.P."/>
            <person name="Bray-Allen S."/>
            <person name="Brown J.Y."/>
            <person name="Brown A.J."/>
            <person name="Buckley D."/>
            <person name="Burton J."/>
            <person name="Bye J."/>
            <person name="Carder C."/>
            <person name="Chapman J.C."/>
            <person name="Clark S.Y."/>
            <person name="Clarke G."/>
            <person name="Clee C."/>
            <person name="Cobley V."/>
            <person name="Collier R.E."/>
            <person name="Corby N."/>
            <person name="Coville G.J."/>
            <person name="Davies J."/>
            <person name="Deadman R."/>
            <person name="Dunn M."/>
            <person name="Earthrowl M."/>
            <person name="Ellington A.G."/>
            <person name="Errington H."/>
            <person name="Frankish A."/>
            <person name="Frankland J."/>
            <person name="French L."/>
            <person name="Garner P."/>
            <person name="Garnett J."/>
            <person name="Gay L."/>
            <person name="Ghori M.R.J."/>
            <person name="Gibson R."/>
            <person name="Gilby L.M."/>
            <person name="Gillett W."/>
            <person name="Glithero R.J."/>
            <person name="Grafham D.V."/>
            <person name="Griffiths C."/>
            <person name="Griffiths-Jones S."/>
            <person name="Grocock R."/>
            <person name="Hammond S."/>
            <person name="Harrison E.S.I."/>
            <person name="Hart E."/>
            <person name="Haugen E."/>
            <person name="Heath P.D."/>
            <person name="Holmes S."/>
            <person name="Holt K."/>
            <person name="Howden P.J."/>
            <person name="Hunt A.R."/>
            <person name="Hunt S.E."/>
            <person name="Hunter G."/>
            <person name="Isherwood J."/>
            <person name="James R."/>
            <person name="Johnson C."/>
            <person name="Johnson D."/>
            <person name="Joy A."/>
            <person name="Kay M."/>
            <person name="Kershaw J.K."/>
            <person name="Kibukawa M."/>
            <person name="Kimberley A.M."/>
            <person name="King A."/>
            <person name="Knights A.J."/>
            <person name="Lad H."/>
            <person name="Laird G."/>
            <person name="Lawlor S."/>
            <person name="Leongamornlert D.A."/>
            <person name="Lloyd D.M."/>
            <person name="Loveland J."/>
            <person name="Lovell J."/>
            <person name="Lush M.J."/>
            <person name="Lyne R."/>
            <person name="Martin S."/>
            <person name="Mashreghi-Mohammadi M."/>
            <person name="Matthews L."/>
            <person name="Matthews N.S.W."/>
            <person name="McLaren S."/>
            <person name="Milne S."/>
            <person name="Mistry S."/>
            <person name="Moore M.J.F."/>
            <person name="Nickerson T."/>
            <person name="O'Dell C.N."/>
            <person name="Oliver K."/>
            <person name="Palmeiri A."/>
            <person name="Palmer S.A."/>
            <person name="Parker A."/>
            <person name="Patel D."/>
            <person name="Pearce A.V."/>
            <person name="Peck A.I."/>
            <person name="Pelan S."/>
            <person name="Phelps K."/>
            <person name="Phillimore B.J."/>
            <person name="Plumb R."/>
            <person name="Rajan J."/>
            <person name="Raymond C."/>
            <person name="Rouse G."/>
            <person name="Saenphimmachak C."/>
            <person name="Sehra H.K."/>
            <person name="Sheridan E."/>
            <person name="Shownkeen R."/>
            <person name="Sims S."/>
            <person name="Skuce C.D."/>
            <person name="Smith M."/>
            <person name="Steward C."/>
            <person name="Subramanian S."/>
            <person name="Sycamore N."/>
            <person name="Tracey A."/>
            <person name="Tromans A."/>
            <person name="Van Helmond Z."/>
            <person name="Wall M."/>
            <person name="Wallis J.M."/>
            <person name="White S."/>
            <person name="Whitehead S.L."/>
            <person name="Wilkinson J.E."/>
            <person name="Willey D.L."/>
            <person name="Williams H."/>
            <person name="Wilming L."/>
            <person name="Wray P.W."/>
            <person name="Wu Z."/>
            <person name="Coulson A."/>
            <person name="Vaudin M."/>
            <person name="Sulston J.E."/>
            <person name="Durbin R.M."/>
            <person name="Hubbard T."/>
            <person name="Wooster R."/>
            <person name="Dunham I."/>
            <person name="Carter N.P."/>
            <person name="McVean G."/>
            <person name="Ross M.T."/>
            <person name="Harrow J."/>
            <person name="Olson M.V."/>
            <person name="Beck S."/>
            <person name="Rogers J."/>
            <person name="Bentley D.R."/>
        </authorList>
    </citation>
    <scope>NUCLEOTIDE SEQUENCE [LARGE SCALE GENOMIC DNA]</scope>
</reference>
<reference key="2">
    <citation type="journal article" date="2004" name="Nat. Genet.">
        <title>Complete sequencing and characterization of 21,243 full-length human cDNAs.</title>
        <authorList>
            <person name="Ota T."/>
            <person name="Suzuki Y."/>
            <person name="Nishikawa T."/>
            <person name="Otsuki T."/>
            <person name="Sugiyama T."/>
            <person name="Irie R."/>
            <person name="Wakamatsu A."/>
            <person name="Hayashi K."/>
            <person name="Sato H."/>
            <person name="Nagai K."/>
            <person name="Kimura K."/>
            <person name="Makita H."/>
            <person name="Sekine M."/>
            <person name="Obayashi M."/>
            <person name="Nishi T."/>
            <person name="Shibahara T."/>
            <person name="Tanaka T."/>
            <person name="Ishii S."/>
            <person name="Yamamoto J."/>
            <person name="Saito K."/>
            <person name="Kawai Y."/>
            <person name="Isono Y."/>
            <person name="Nakamura Y."/>
            <person name="Nagahari K."/>
            <person name="Murakami K."/>
            <person name="Yasuda T."/>
            <person name="Iwayanagi T."/>
            <person name="Wagatsuma M."/>
            <person name="Shiratori A."/>
            <person name="Sudo H."/>
            <person name="Hosoiri T."/>
            <person name="Kaku Y."/>
            <person name="Kodaira H."/>
            <person name="Kondo H."/>
            <person name="Sugawara M."/>
            <person name="Takahashi M."/>
            <person name="Kanda K."/>
            <person name="Yokoi T."/>
            <person name="Furuya T."/>
            <person name="Kikkawa E."/>
            <person name="Omura Y."/>
            <person name="Abe K."/>
            <person name="Kamihara K."/>
            <person name="Katsuta N."/>
            <person name="Sato K."/>
            <person name="Tanikawa M."/>
            <person name="Yamazaki M."/>
            <person name="Ninomiya K."/>
            <person name="Ishibashi T."/>
            <person name="Yamashita H."/>
            <person name="Murakawa K."/>
            <person name="Fujimori K."/>
            <person name="Tanai H."/>
            <person name="Kimata M."/>
            <person name="Watanabe M."/>
            <person name="Hiraoka S."/>
            <person name="Chiba Y."/>
            <person name="Ishida S."/>
            <person name="Ono Y."/>
            <person name="Takiguchi S."/>
            <person name="Watanabe S."/>
            <person name="Yosida M."/>
            <person name="Hotuta T."/>
            <person name="Kusano J."/>
            <person name="Kanehori K."/>
            <person name="Takahashi-Fujii A."/>
            <person name="Hara H."/>
            <person name="Tanase T.-O."/>
            <person name="Nomura Y."/>
            <person name="Togiya S."/>
            <person name="Komai F."/>
            <person name="Hara R."/>
            <person name="Takeuchi K."/>
            <person name="Arita M."/>
            <person name="Imose N."/>
            <person name="Musashino K."/>
            <person name="Yuuki H."/>
            <person name="Oshima A."/>
            <person name="Sasaki N."/>
            <person name="Aotsuka S."/>
            <person name="Yoshikawa Y."/>
            <person name="Matsunawa H."/>
            <person name="Ichihara T."/>
            <person name="Shiohata N."/>
            <person name="Sano S."/>
            <person name="Moriya S."/>
            <person name="Momiyama H."/>
            <person name="Satoh N."/>
            <person name="Takami S."/>
            <person name="Terashima Y."/>
            <person name="Suzuki O."/>
            <person name="Nakagawa S."/>
            <person name="Senoh A."/>
            <person name="Mizoguchi H."/>
            <person name="Goto Y."/>
            <person name="Shimizu F."/>
            <person name="Wakebe H."/>
            <person name="Hishigaki H."/>
            <person name="Watanabe T."/>
            <person name="Sugiyama A."/>
            <person name="Takemoto M."/>
            <person name="Kawakami B."/>
            <person name="Yamazaki M."/>
            <person name="Watanabe K."/>
            <person name="Kumagai A."/>
            <person name="Itakura S."/>
            <person name="Fukuzumi Y."/>
            <person name="Fujimori Y."/>
            <person name="Komiyama M."/>
            <person name="Tashiro H."/>
            <person name="Tanigami A."/>
            <person name="Fujiwara T."/>
            <person name="Ono T."/>
            <person name="Yamada K."/>
            <person name="Fujii Y."/>
            <person name="Ozaki K."/>
            <person name="Hirao M."/>
            <person name="Ohmori Y."/>
            <person name="Kawabata A."/>
            <person name="Hikiji T."/>
            <person name="Kobatake N."/>
            <person name="Inagaki H."/>
            <person name="Ikema Y."/>
            <person name="Okamoto S."/>
            <person name="Okitani R."/>
            <person name="Kawakami T."/>
            <person name="Noguchi S."/>
            <person name="Itoh T."/>
            <person name="Shigeta K."/>
            <person name="Senba T."/>
            <person name="Matsumura K."/>
            <person name="Nakajima Y."/>
            <person name="Mizuno T."/>
            <person name="Morinaga M."/>
            <person name="Sasaki M."/>
            <person name="Togashi T."/>
            <person name="Oyama M."/>
            <person name="Hata H."/>
            <person name="Watanabe M."/>
            <person name="Komatsu T."/>
            <person name="Mizushima-Sugano J."/>
            <person name="Satoh T."/>
            <person name="Shirai Y."/>
            <person name="Takahashi Y."/>
            <person name="Nakagawa K."/>
            <person name="Okumura K."/>
            <person name="Nagase T."/>
            <person name="Nomura N."/>
            <person name="Kikuchi H."/>
            <person name="Masuho Y."/>
            <person name="Yamashita R."/>
            <person name="Nakai K."/>
            <person name="Yada T."/>
            <person name="Nakamura Y."/>
            <person name="Ohara O."/>
            <person name="Isogai T."/>
            <person name="Sugano S."/>
        </authorList>
    </citation>
    <scope>NUCLEOTIDE SEQUENCE [LARGE SCALE MRNA] OF 818-1603</scope>
    <scope>VARIANT THR-935</scope>
    <source>
        <tissue>Brain</tissue>
    </source>
</reference>
<reference key="3">
    <citation type="journal article" date="2004" name="Genome Res.">
        <title>The status, quality, and expansion of the NIH full-length cDNA project: the Mammalian Gene Collection (MGC).</title>
        <authorList>
            <consortium name="The MGC Project Team"/>
        </authorList>
    </citation>
    <scope>NUCLEOTIDE SEQUENCE [LARGE SCALE MRNA] OF 1126-1603</scope>
    <source>
        <tissue>Uterus</tissue>
    </source>
</reference>
<reference key="4">
    <citation type="journal article" date="1997" name="Genome Res.">
        <title>Large-scale concatenation cDNA sequencing.</title>
        <authorList>
            <person name="Yu W."/>
            <person name="Andersson B."/>
            <person name="Worley K.C."/>
            <person name="Muzny D.M."/>
            <person name="Ding Y."/>
            <person name="Liu W."/>
            <person name="Ricafrente J.Y."/>
            <person name="Wentland M.A."/>
            <person name="Lennon G."/>
            <person name="Gibbs R.A."/>
        </authorList>
    </citation>
    <scope>NUCLEOTIDE SEQUENCE [LARGE SCALE MRNA] OF 1137-1603</scope>
    <source>
        <tissue>Brain</tissue>
    </source>
</reference>
<reference key="5">
    <citation type="journal article" date="2006" name="Cell">
        <title>Global, in vivo, and site-specific phosphorylation dynamics in signaling networks.</title>
        <authorList>
            <person name="Olsen J.V."/>
            <person name="Blagoev B."/>
            <person name="Gnad F."/>
            <person name="Macek B."/>
            <person name="Kumar C."/>
            <person name="Mortensen P."/>
            <person name="Mann M."/>
        </authorList>
    </citation>
    <scope>IDENTIFICATION BY MASS SPECTROMETRY [LARGE SCALE ANALYSIS]</scope>
    <source>
        <tissue>Cervix carcinoma</tissue>
    </source>
</reference>
<reference key="6">
    <citation type="journal article" date="2006" name="Nat. Biotechnol.">
        <title>A probability-based approach for high-throughput protein phosphorylation analysis and site localization.</title>
        <authorList>
            <person name="Beausoleil S.A."/>
            <person name="Villen J."/>
            <person name="Gerber S.A."/>
            <person name="Rush J."/>
            <person name="Gygi S.P."/>
        </authorList>
    </citation>
    <scope>PHOSPHORYLATION [LARGE SCALE ANALYSIS] AT SER-1399</scope>
    <scope>IDENTIFICATION BY MASS SPECTROMETRY [LARGE SCALE ANALYSIS]</scope>
    <source>
        <tissue>Cervix carcinoma</tissue>
    </source>
</reference>
<reference key="7">
    <citation type="journal article" date="2007" name="Science">
        <title>ATM and ATR substrate analysis reveals extensive protein networks responsive to DNA damage.</title>
        <authorList>
            <person name="Matsuoka S."/>
            <person name="Ballif B.A."/>
            <person name="Smogorzewska A."/>
            <person name="McDonald E.R. III"/>
            <person name="Hurov K.E."/>
            <person name="Luo J."/>
            <person name="Bakalarski C.E."/>
            <person name="Zhao Z."/>
            <person name="Solimini N."/>
            <person name="Lerenthal Y."/>
            <person name="Shiloh Y."/>
            <person name="Gygi S.P."/>
            <person name="Elledge S.J."/>
        </authorList>
    </citation>
    <scope>PHOSPHORYLATION [LARGE SCALE ANALYSIS] AT SER-829</scope>
    <scope>IDENTIFICATION BY MASS SPECTROMETRY [LARGE SCALE ANALYSIS]</scope>
    <source>
        <tissue>Embryonic kidney</tissue>
    </source>
</reference>
<reference key="8">
    <citation type="journal article" date="2008" name="J. Proteome Res.">
        <title>Combining protein-based IMAC, peptide-based IMAC, and MudPIT for efficient phosphoproteomic analysis.</title>
        <authorList>
            <person name="Cantin G.T."/>
            <person name="Yi W."/>
            <person name="Lu B."/>
            <person name="Park S.K."/>
            <person name="Xu T."/>
            <person name="Lee J.-D."/>
            <person name="Yates J.R. III"/>
        </authorList>
    </citation>
    <scope>IDENTIFICATION BY MASS SPECTROMETRY [LARGE SCALE ANALYSIS]</scope>
    <source>
        <tissue>Cervix carcinoma</tissue>
    </source>
</reference>
<reference key="9">
    <citation type="journal article" date="2008" name="Proc. Natl. Acad. Sci. U.S.A.">
        <title>A quantitative atlas of mitotic phosphorylation.</title>
        <authorList>
            <person name="Dephoure N."/>
            <person name="Zhou C."/>
            <person name="Villen J."/>
            <person name="Beausoleil S.A."/>
            <person name="Bakalarski C.E."/>
            <person name="Elledge S.J."/>
            <person name="Gygi S.P."/>
        </authorList>
    </citation>
    <scope>PHOSPHORYLATION [LARGE SCALE ANALYSIS] AT SER-846 AND SER-1399</scope>
    <scope>IDENTIFICATION BY MASS SPECTROMETRY [LARGE SCALE ANALYSIS]</scope>
    <source>
        <tissue>Cervix carcinoma</tissue>
    </source>
</reference>
<reference key="10">
    <citation type="journal article" date="2010" name="Sci. Signal.">
        <title>Quantitative phosphoproteomics reveals widespread full phosphorylation site occupancy during mitosis.</title>
        <authorList>
            <person name="Olsen J.V."/>
            <person name="Vermeulen M."/>
            <person name="Santamaria A."/>
            <person name="Kumar C."/>
            <person name="Miller M.L."/>
            <person name="Jensen L.J."/>
            <person name="Gnad F."/>
            <person name="Cox J."/>
            <person name="Jensen T.S."/>
            <person name="Nigg E.A."/>
            <person name="Brunak S."/>
            <person name="Mann M."/>
        </authorList>
    </citation>
    <scope>PHOSPHORYLATION [LARGE SCALE ANALYSIS] AT SER-596</scope>
    <scope>IDENTIFICATION BY MASS SPECTROMETRY [LARGE SCALE ANALYSIS]</scope>
    <source>
        <tissue>Cervix carcinoma</tissue>
    </source>
</reference>
<reference key="11">
    <citation type="journal article" date="2013" name="J. Proteome Res.">
        <title>Toward a comprehensive characterization of a human cancer cell phosphoproteome.</title>
        <authorList>
            <person name="Zhou H."/>
            <person name="Di Palma S."/>
            <person name="Preisinger C."/>
            <person name="Peng M."/>
            <person name="Polat A.N."/>
            <person name="Heck A.J."/>
            <person name="Mohammed S."/>
        </authorList>
    </citation>
    <scope>PHOSPHORYLATION [LARGE SCALE ANALYSIS] AT SER-596; SER-896; SER-1064; SER-1187; SER-1399 AND SER-1507</scope>
    <scope>IDENTIFICATION BY MASS SPECTROMETRY [LARGE SCALE ANALYSIS]</scope>
    <source>
        <tissue>Cervix carcinoma</tissue>
        <tissue>Erythroleukemia</tissue>
    </source>
</reference>
<reference key="12">
    <citation type="journal article" date="2014" name="Am. J. Hum. Genet.">
        <title>De novo truncating mutations in AHDC1 in individuals with syndromic expressive language delay, hypotonia, and sleep apnea.</title>
        <authorList>
            <person name="Xia F."/>
            <person name="Bainbridge M.N."/>
            <person name="Tan T.Y."/>
            <person name="Wangler M.F."/>
            <person name="Scheuerle A.E."/>
            <person name="Zackai E.H."/>
            <person name="Harr M.H."/>
            <person name="Sutton V.R."/>
            <person name="Nalam R.L."/>
            <person name="Zhu W."/>
            <person name="Nash M."/>
            <person name="Ryan M.M."/>
            <person name="Yaplito-Lee J."/>
            <person name="Hunter J.V."/>
            <person name="Deardorff M.A."/>
            <person name="Penney S.J."/>
            <person name="Beaudet A.L."/>
            <person name="Plon S.E."/>
            <person name="Boerwinkle E.A."/>
            <person name="Lupski J.R."/>
            <person name="Eng C.M."/>
            <person name="Muzny D.M."/>
            <person name="Yang Y."/>
            <person name="Gibbs R.A."/>
        </authorList>
    </citation>
    <scope>INVOLVEMENT IN XIGIS</scope>
</reference>
<reference key="13">
    <citation type="journal article" date="2014" name="J. Proteomics">
        <title>An enzyme assisted RP-RPLC approach for in-depth analysis of human liver phosphoproteome.</title>
        <authorList>
            <person name="Bian Y."/>
            <person name="Song C."/>
            <person name="Cheng K."/>
            <person name="Dong M."/>
            <person name="Wang F."/>
            <person name="Huang J."/>
            <person name="Sun D."/>
            <person name="Wang L."/>
            <person name="Ye M."/>
            <person name="Zou H."/>
        </authorList>
    </citation>
    <scope>PHOSPHORYLATION [LARGE SCALE ANALYSIS] AT SER-268; SER-1399 AND SER-1507</scope>
    <scope>IDENTIFICATION BY MASS SPECTROMETRY [LARGE SCALE ANALYSIS]</scope>
    <source>
        <tissue>Liver</tissue>
    </source>
</reference>
<reference key="14">
    <citation type="journal article" date="2014" name="Mol. Cell. Proteomics">
        <title>Immunoaffinity enrichment and mass spectrometry analysis of protein methylation.</title>
        <authorList>
            <person name="Guo A."/>
            <person name="Gu H."/>
            <person name="Zhou J."/>
            <person name="Mulhern D."/>
            <person name="Wang Y."/>
            <person name="Lee K.A."/>
            <person name="Yang V."/>
            <person name="Aguiar M."/>
            <person name="Kornhauser J."/>
            <person name="Jia X."/>
            <person name="Ren J."/>
            <person name="Beausoleil S.A."/>
            <person name="Silva J.C."/>
            <person name="Vemulapalli V."/>
            <person name="Bedford M.T."/>
            <person name="Comb M.J."/>
        </authorList>
    </citation>
    <scope>METHYLATION [LARGE SCALE ANALYSIS] AT ARG-891</scope>
    <scope>IDENTIFICATION BY MASS SPECTROMETRY [LARGE SCALE ANALYSIS]</scope>
    <source>
        <tissue>Colon carcinoma</tissue>
    </source>
</reference>
<reference key="15">
    <citation type="journal article" date="2017" name="Mol. Syndromol.">
        <title>Whole-exome sequencing identifies a de novo AHDC1 mutation in a colombian patient with Xia-Gibbs syndrome.</title>
        <authorList>
            <person name="Garcia-Acero M."/>
            <person name="Acosta J."/>
        </authorList>
    </citation>
    <scope>INVOLVEMENT IN XIGIS</scope>
</reference>
<reference key="16">
    <citation type="journal article" date="2017" name="Nat. Struct. Mol. Biol.">
        <title>Site-specific mapping of the human SUMO proteome reveals co-modification with phosphorylation.</title>
        <authorList>
            <person name="Hendriks I.A."/>
            <person name="Lyon D."/>
            <person name="Young C."/>
            <person name="Jensen L.J."/>
            <person name="Vertegaal A.C."/>
            <person name="Nielsen M.L."/>
        </authorList>
    </citation>
    <scope>SUMOYLATION [LARGE SCALE ANALYSIS] AT LYS-609 AND LYS-1409</scope>
    <scope>IDENTIFICATION BY MASS SPECTROMETRY [LARGE SCALE ANALYSIS]</scope>
</reference>
<reference key="17">
    <citation type="journal article" date="2019" name="Iran. J. Med. Sci.">
        <title>Syndromic Intellectual Disability Caused by a Novel Truncating Variant in AHDC1: A Case Report.</title>
        <authorList>
            <person name="Diaz-Ordonez L."/>
            <person name="Ramirez-Montano D."/>
            <person name="Candelo E."/>
            <person name="Cruz S."/>
            <person name="Pachajoa H."/>
        </authorList>
    </citation>
    <scope>INVOLVEMENT IN XIGIS</scope>
</reference>
<reference key="18">
    <citation type="journal article" date="2015" name="Cold Spring Harb. Mol. Case Stud.">
        <title>De novo truncating variants in the AHDC1 gene encoding the AT-hook DNA-binding motif-containing protein 1 are associated with intellectual disability and developmental delay.</title>
        <authorList>
            <person name="Yang H."/>
            <person name="Douglas G."/>
            <person name="Monaghan K.G."/>
            <person name="Retterer K."/>
            <person name="Cho M.T."/>
            <person name="Escobar L.F."/>
            <person name="Tucker M.E."/>
            <person name="Stoler J."/>
            <person name="Rodan L.H."/>
            <person name="Stein D."/>
            <person name="Marks W."/>
            <person name="Enns G.M."/>
            <person name="Platt J."/>
            <person name="Cox R."/>
            <person name="Wheeler P.G."/>
            <person name="Crain C."/>
            <person name="Calhoun A."/>
            <person name="Tryon R."/>
            <person name="Richard G."/>
            <person name="Vitazka P."/>
            <person name="Chung W.K."/>
        </authorList>
    </citation>
    <scope>VARIANT XIGIS 494-LYS--LEU-1603 DEL</scope>
</reference>
<reference key="19">
    <citation type="journal article" date="2018" name="Am. J. Med. Genet. A">
        <title>The phenotypic spectrum of Xia-Gibbs syndrome.</title>
        <authorList>
            <person name="Jiang Y."/>
            <person name="Wangler M.F."/>
            <person name="McGuire A.L."/>
            <person name="Lupski J.R."/>
            <person name="Posey J.E."/>
            <person name="Khayat M.M."/>
            <person name="Murdock D.R."/>
            <person name="Sanchez-Pulido L."/>
            <person name="Ponting C.P."/>
            <person name="Xia F."/>
            <person name="Hunter J.V."/>
            <person name="Meng Q."/>
            <person name="Murugan M."/>
            <person name="Gibbs R.A."/>
        </authorList>
    </citation>
    <scope>VARIANTS XIGIS 262-GLN--LEU-1603 DEL; 688-ARG--LEU-1603 DEL; 882-GLN--LEU-1603 DEL; 925-ARG--LEU-1603 DEL; 970-GLN--LEU-1603 DEL; 1258-SER--LEU-1603 DEL AND 1330-SER--LEU-1603 DEL</scope>
</reference>
<reference key="20">
    <citation type="journal article" date="2018" name="Am. J. Med. Genet. A">
        <title>Variable clinical manifestations of Xia-Gibbs syndrome: findings of consecutively identified cases at a single children's hospital.</title>
        <authorList>
            <person name="Ritter A.L."/>
            <person name="McDougall C."/>
            <person name="Skraban C."/>
            <person name="Medne L."/>
            <person name="Bedoukian E.C."/>
            <person name="Asher S.B."/>
            <person name="Balciuniene J."/>
            <person name="Campbell C.D."/>
            <person name="Baker S.W."/>
            <person name="Denenberg E.H."/>
            <person name="Mazzola S."/>
            <person name="Fiordaliso S.K."/>
            <person name="Krantz I.D."/>
            <person name="Kaplan P."/>
            <person name="Ierardi-Curto L."/>
            <person name="Santani A.B."/>
            <person name="Zackai E.H."/>
            <person name="Izumi K."/>
        </authorList>
    </citation>
    <scope>VARIANTS XIGIS 494-LYS--LEU-1603 DEL; 587-ARG--LEU-1603 DEL AND 825-GLN--LEU-1603 DEL</scope>
</reference>
<reference key="21">
    <citation type="journal article" date="2019" name="Cold Spring Harb. Mol. Case Stud.">
        <title>Xia-Gibbs syndrome in adulthood: a case report with insight into the natural history of the condition.</title>
        <authorList>
            <person name="Murdock D.R."/>
            <person name="Jiang Y."/>
            <person name="Wangler M."/>
            <person name="Khayat M.M."/>
            <person name="Sabo A."/>
            <person name="Juusola J."/>
            <person name="McWalter K."/>
            <person name="Schatz K.S."/>
            <person name="Gunay-Aygun M."/>
            <person name="Gibbs R.A."/>
        </authorList>
    </citation>
    <scope>VARIANT XIGIS 327-GLN--LEU-1603 DEL</scope>
</reference>
<reference key="22">
    <citation type="journal article" date="2019" name="Mol. Genet. Genomic Med.">
        <title>Two Chinese Xia-Gibbs syndrome patients with partial growth hormone deficiency.</title>
        <authorList>
            <person name="Cheng X."/>
            <person name="Tang F."/>
            <person name="Hu X."/>
            <person name="Li H."/>
            <person name="Li M."/>
            <person name="Fu Y."/>
            <person name="Yan L."/>
            <person name="Li Z."/>
            <person name="Gou P."/>
            <person name="Su N."/>
            <person name="Gong C."/>
            <person name="He W."/>
            <person name="Xiang R."/>
            <person name="Bu D."/>
            <person name="Shen Y."/>
        </authorList>
    </citation>
    <scope>INVOLVEMENT IN XIGIS</scope>
</reference>
<reference key="23">
    <citation type="journal article" date="2020" name="Eur. J. Med. Genet.">
        <title>Extending the phenotype of Xia-Gibbs syndrome in a two-year-old patient with craniosynostosis with a novel de novo AHDC1 missense mutation.</title>
        <authorList>
            <person name="Gumus E."/>
        </authorList>
    </citation>
    <scope>VARIANT XIGIS GLY-1457</scope>
</reference>
<reference key="24">
    <citation type="journal article" date="2020" name="Mol. Syndromol.">
        <title>Novel AHDC1 gene mutation in a brazilian individual: implications of Xia-Gibbs syndrome.</title>
        <authorList>
            <person name="Cardoso-Dos-Santos A.C."/>
            <person name="Oliveira Silva T."/>
            <person name="Silveira Faccini A."/>
            <person name="Woycinck Kowalski T."/>
            <person name="Bertoli-Avella A."/>
            <person name="Morales Saute J.A."/>
            <person name="Schuler-Faccini L."/>
            <person name="de Oliveira Poswar F."/>
        </authorList>
    </citation>
    <scope>VARIANT XIGIS 151-ARG--LEU-1603 DEL</scope>
</reference>
<reference key="25">
    <citation type="journal article" date="2021" name="Eur. J. Med. Genet.">
        <title>Phenotypic heterogeneity and mosaicism in Xia-Gibbs syndrome: Five Danish patients with novel variants in AHDC1.</title>
        <authorList>
            <person name="Faergeman S.L."/>
            <person name="Bojesen A.B."/>
            <person name="Rasmussen M."/>
            <person name="Becher N."/>
            <person name="Andreasen L."/>
            <person name="Andersen B.N."/>
            <person name="Erbs E."/>
            <person name="Lildballe D.L."/>
            <person name="Nielsen J.E.K."/>
            <person name="Zilmer M."/>
            <person name="Hammer T.B."/>
            <person name="Andersen M.O."/>
            <person name="Brasch-Andersen C."/>
            <person name="Fagerberg C.R."/>
            <person name="Illum N.O."/>
            <person name="Thorup M.B."/>
            <person name="Gregersen P.A."/>
        </authorList>
    </citation>
    <scope>VARIANT XIGIS 823-SER--LEU-1603 DEL</scope>
</reference>
<reference key="26">
    <citation type="journal article" date="2021" name="HGG Adv.">
        <title>AHDC1 missense mutations in Xia-Gibbs syndrome.</title>
        <authorList>
            <person name="Khayat M.M."/>
            <person name="Hu J."/>
            <person name="Jiang Y."/>
            <person name="Li H."/>
            <person name="Chander V."/>
            <person name="Dawood M."/>
            <person name="Hansen A.W."/>
            <person name="Li S."/>
            <person name="Friedman J."/>
            <person name="Cross L."/>
            <person name="Bijlsma E.K."/>
            <person name="Ruivenkamp C.A.L."/>
            <person name="Sansbury F.H."/>
            <person name="Innis J.W."/>
            <person name="O'Shea J.O."/>
            <person name="Meng Q."/>
            <person name="Rosenfeld J.A."/>
            <person name="McWalter K."/>
            <person name="Wangler M.F."/>
            <person name="Lupski J.R."/>
            <person name="Posey J.E."/>
            <person name="Murdock D."/>
            <person name="Gibbs R.A."/>
        </authorList>
    </citation>
    <scope>VARIANTS XIGIS SER-47; TRP-487; ASP-537; SER-548; HIS-549; PRO-1348 AND SER-1478</scope>
</reference>
<reference key="27">
    <citation type="journal article" date="2021" name="Hum. Mutat.">
        <title>Phenotypic and protein localization heterogeneity associated with AHDC1 pathogenic protein-truncating alleles in Xia-Gibbs syndrome.</title>
        <authorList>
            <person name="Khayat M.M."/>
            <person name="Li H."/>
            <person name="Chander V."/>
            <person name="Hu J."/>
            <person name="Hansen A.W."/>
            <person name="Li S."/>
            <person name="Traynelis J."/>
            <person name="Shen H."/>
            <person name="Weissenberger G."/>
            <person name="Stossi F."/>
            <person name="Johnson H.L."/>
            <person name="Lupski J.R."/>
            <person name="Posey J.E."/>
            <person name="Sabo A."/>
            <person name="Meng Q."/>
            <person name="Murdock D.R."/>
            <person name="Wangler M."/>
            <person name="Gibbs R.A."/>
        </authorList>
    </citation>
    <scope>VARIANTS XIGIS 262-GLN--LEU-1603 DEL; 327-GLN--LEU-1603 DEL; 587-ARG--LEU-1603 DEL; ASN-607; 688-ARG--LEU-1603 DEL; 730-GLU--LEU-1603 DEL; ARG-792; 825-GLN--LEU-1603 DEL; 882-GLN--LEU-1603 DEL; 925-ARG--LEU-1603 DEL; 970-GLN--LEU-1603 DEL; 978-GLN--LEU-1603 DEL; 1068-TYR--LEU-1603 DEL; 1156-GLN--LEU-1603 DEL; 1258-SER--LEU-1603 DEL AND 1330-SER--LEU-1603 DEL</scope>
    <scope>SUBCELLULAR LOCATION</scope>
    <scope>CHARACTERIZATION OF VARIANTS XIGIS 262-GLN--LEU-1603 DEL; ASN-607; ARG-792; 925-ARG--LEU-1603 DEL AND 970-GLN--LEU-1603 DEL</scope>
</reference>
<reference key="28">
    <citation type="journal article" date="2022" name="Nature">
        <title>Gibbin mesodermal regulation patterns epithelial development.</title>
        <authorList>
            <person name="Collier A."/>
            <person name="Liu A."/>
            <person name="Torkelson J."/>
            <person name="Pattison J."/>
            <person name="Gaddam S."/>
            <person name="Zhen H."/>
            <person name="Patel T."/>
            <person name="McCarthy K."/>
            <person name="Ghanim H."/>
            <person name="Oro A.E."/>
        </authorList>
    </citation>
    <scope>FUNCTION</scope>
    <scope>SUBCELLULAR LOCATION</scope>
</reference>